<evidence type="ECO:0000255" key="1">
    <source>
        <dbReference type="HAMAP-Rule" id="MF_01080"/>
    </source>
</evidence>
<organism>
    <name type="scientific">Staphylococcus aureus (strain N315)</name>
    <dbReference type="NCBI Taxonomy" id="158879"/>
    <lineage>
        <taxon>Bacteria</taxon>
        <taxon>Bacillati</taxon>
        <taxon>Bacillota</taxon>
        <taxon>Bacilli</taxon>
        <taxon>Bacillales</taxon>
        <taxon>Staphylococcaceae</taxon>
        <taxon>Staphylococcus</taxon>
    </lineage>
</organism>
<sequence length="305" mass="34606">MYNGILPVYKERGLTSHDVVFKLRKILKTKKIGHTGTLDPEVAGVLPVCIGNATRVSDYVMDMGKAYEATVSIGRSTTTEDQTGDTLETKGVHSADFNKDDIDRLLENFKGVIEQIPPMYSSVKVNGKKLYEYARNNETVERPKRKVNIKDIGRISELDFKENECHFKIRVICGKGTYIRTLATDIGVKLGFPAHMSKLTRIESGGFVLKDSLTLEQIKELHEQDSLQNKLFPLEYGLKGLPSIKIKDSHIKKRILNGQKFNKNEFDNKIKDQIVFIDDDSEKVLAIYMVHPTKESEIKPKKVFN</sequence>
<feature type="chain" id="PRO_0000121904" description="tRNA pseudouridine synthase B">
    <location>
        <begin position="1"/>
        <end position="305"/>
    </location>
</feature>
<feature type="active site" description="Nucleophile" evidence="1">
    <location>
        <position position="39"/>
    </location>
</feature>
<gene>
    <name evidence="1" type="primary">truB</name>
    <name type="ordered locus">SA1114</name>
</gene>
<proteinExistence type="evidence at protein level"/>
<keyword id="KW-0413">Isomerase</keyword>
<keyword id="KW-0819">tRNA processing</keyword>
<comment type="function">
    <text evidence="1">Responsible for synthesis of pseudouridine from uracil-55 in the psi GC loop of transfer RNAs.</text>
</comment>
<comment type="catalytic activity">
    <reaction evidence="1">
        <text>uridine(55) in tRNA = pseudouridine(55) in tRNA</text>
        <dbReference type="Rhea" id="RHEA:42532"/>
        <dbReference type="Rhea" id="RHEA-COMP:10101"/>
        <dbReference type="Rhea" id="RHEA-COMP:10102"/>
        <dbReference type="ChEBI" id="CHEBI:65314"/>
        <dbReference type="ChEBI" id="CHEBI:65315"/>
        <dbReference type="EC" id="5.4.99.25"/>
    </reaction>
</comment>
<comment type="similarity">
    <text evidence="1">Belongs to the pseudouridine synthase TruB family. Type 1 subfamily.</text>
</comment>
<name>TRUB_STAAN</name>
<dbReference type="EC" id="5.4.99.25" evidence="1"/>
<dbReference type="EMBL" id="BA000018">
    <property type="protein sequence ID" value="BAB42366.1"/>
    <property type="molecule type" value="Genomic_DNA"/>
</dbReference>
<dbReference type="PIR" id="B89901">
    <property type="entry name" value="B89901"/>
</dbReference>
<dbReference type="RefSeq" id="WP_000282298.1">
    <property type="nucleotide sequence ID" value="NC_002745.2"/>
</dbReference>
<dbReference type="SMR" id="P65855"/>
<dbReference type="EnsemblBacteria" id="BAB42366">
    <property type="protein sequence ID" value="BAB42366"/>
    <property type="gene ID" value="BAB42366"/>
</dbReference>
<dbReference type="KEGG" id="sau:SA1114"/>
<dbReference type="HOGENOM" id="CLU_032087_0_1_9"/>
<dbReference type="GO" id="GO:0003723">
    <property type="term" value="F:RNA binding"/>
    <property type="evidence" value="ECO:0007669"/>
    <property type="project" value="InterPro"/>
</dbReference>
<dbReference type="GO" id="GO:0160148">
    <property type="term" value="F:tRNA pseudouridine(55) synthase activity"/>
    <property type="evidence" value="ECO:0007669"/>
    <property type="project" value="UniProtKB-EC"/>
</dbReference>
<dbReference type="GO" id="GO:1990481">
    <property type="term" value="P:mRNA pseudouridine synthesis"/>
    <property type="evidence" value="ECO:0007669"/>
    <property type="project" value="TreeGrafter"/>
</dbReference>
<dbReference type="GO" id="GO:0031119">
    <property type="term" value="P:tRNA pseudouridine synthesis"/>
    <property type="evidence" value="ECO:0007669"/>
    <property type="project" value="UniProtKB-UniRule"/>
</dbReference>
<dbReference type="CDD" id="cd02573">
    <property type="entry name" value="PseudoU_synth_EcTruB"/>
    <property type="match status" value="1"/>
</dbReference>
<dbReference type="FunFam" id="3.30.2350.10:FF:000011">
    <property type="entry name" value="tRNA pseudouridine synthase B"/>
    <property type="match status" value="1"/>
</dbReference>
<dbReference type="Gene3D" id="3.30.2350.10">
    <property type="entry name" value="Pseudouridine synthase"/>
    <property type="match status" value="1"/>
</dbReference>
<dbReference type="HAMAP" id="MF_01080">
    <property type="entry name" value="TruB_bact"/>
    <property type="match status" value="1"/>
</dbReference>
<dbReference type="InterPro" id="IPR020103">
    <property type="entry name" value="PsdUridine_synth_cat_dom_sf"/>
</dbReference>
<dbReference type="InterPro" id="IPR002501">
    <property type="entry name" value="PsdUridine_synth_N"/>
</dbReference>
<dbReference type="InterPro" id="IPR014780">
    <property type="entry name" value="tRNA_psdUridine_synth_TruB"/>
</dbReference>
<dbReference type="InterPro" id="IPR032819">
    <property type="entry name" value="TruB_C"/>
</dbReference>
<dbReference type="NCBIfam" id="TIGR00431">
    <property type="entry name" value="TruB"/>
    <property type="match status" value="1"/>
</dbReference>
<dbReference type="PANTHER" id="PTHR13767:SF2">
    <property type="entry name" value="PSEUDOURIDYLATE SYNTHASE TRUB1"/>
    <property type="match status" value="1"/>
</dbReference>
<dbReference type="PANTHER" id="PTHR13767">
    <property type="entry name" value="TRNA-PSEUDOURIDINE SYNTHASE"/>
    <property type="match status" value="1"/>
</dbReference>
<dbReference type="Pfam" id="PF16198">
    <property type="entry name" value="TruB_C_2"/>
    <property type="match status" value="1"/>
</dbReference>
<dbReference type="Pfam" id="PF01509">
    <property type="entry name" value="TruB_N"/>
    <property type="match status" value="1"/>
</dbReference>
<dbReference type="SUPFAM" id="SSF55120">
    <property type="entry name" value="Pseudouridine synthase"/>
    <property type="match status" value="1"/>
</dbReference>
<reference key="1">
    <citation type="journal article" date="2001" name="Lancet">
        <title>Whole genome sequencing of meticillin-resistant Staphylococcus aureus.</title>
        <authorList>
            <person name="Kuroda M."/>
            <person name="Ohta T."/>
            <person name="Uchiyama I."/>
            <person name="Baba T."/>
            <person name="Yuzawa H."/>
            <person name="Kobayashi I."/>
            <person name="Cui L."/>
            <person name="Oguchi A."/>
            <person name="Aoki K."/>
            <person name="Nagai Y."/>
            <person name="Lian J.-Q."/>
            <person name="Ito T."/>
            <person name="Kanamori M."/>
            <person name="Matsumaru H."/>
            <person name="Maruyama A."/>
            <person name="Murakami H."/>
            <person name="Hosoyama A."/>
            <person name="Mizutani-Ui Y."/>
            <person name="Takahashi N.K."/>
            <person name="Sawano T."/>
            <person name="Inoue R."/>
            <person name="Kaito C."/>
            <person name="Sekimizu K."/>
            <person name="Hirakawa H."/>
            <person name="Kuhara S."/>
            <person name="Goto S."/>
            <person name="Yabuzaki J."/>
            <person name="Kanehisa M."/>
            <person name="Yamashita A."/>
            <person name="Oshima K."/>
            <person name="Furuya K."/>
            <person name="Yoshino C."/>
            <person name="Shiba T."/>
            <person name="Hattori M."/>
            <person name="Ogasawara N."/>
            <person name="Hayashi H."/>
            <person name="Hiramatsu K."/>
        </authorList>
    </citation>
    <scope>NUCLEOTIDE SEQUENCE [LARGE SCALE GENOMIC DNA]</scope>
    <source>
        <strain>N315</strain>
    </source>
</reference>
<reference key="2">
    <citation type="submission" date="2007-10" db="UniProtKB">
        <title>Shotgun proteomic analysis of total and membrane protein extracts of S. aureus strain N315.</title>
        <authorList>
            <person name="Vaezzadeh A.R."/>
            <person name="Deshusses J."/>
            <person name="Lescuyer P."/>
            <person name="Hochstrasser D.F."/>
        </authorList>
    </citation>
    <scope>IDENTIFICATION BY MASS SPECTROMETRY [LARGE SCALE ANALYSIS]</scope>
    <source>
        <strain>N315</strain>
    </source>
</reference>
<protein>
    <recommendedName>
        <fullName evidence="1">tRNA pseudouridine synthase B</fullName>
        <ecNumber evidence="1">5.4.99.25</ecNumber>
    </recommendedName>
    <alternativeName>
        <fullName evidence="1">tRNA pseudouridine(55) synthase</fullName>
        <shortName evidence="1">Psi55 synthase</shortName>
    </alternativeName>
    <alternativeName>
        <fullName evidence="1">tRNA pseudouridylate synthase</fullName>
    </alternativeName>
    <alternativeName>
        <fullName evidence="1">tRNA-uridine isomerase</fullName>
    </alternativeName>
</protein>
<accession>P65855</accession>
<accession>Q99UK1</accession>